<proteinExistence type="inferred from homology"/>
<organism>
    <name type="scientific">Aspergillus flavus (strain ATCC 200026 / FGSC A1120 / IAM 13836 / NRRL 3357 / JCM 12722 / SRRC 167)</name>
    <dbReference type="NCBI Taxonomy" id="332952"/>
    <lineage>
        <taxon>Eukaryota</taxon>
        <taxon>Fungi</taxon>
        <taxon>Dikarya</taxon>
        <taxon>Ascomycota</taxon>
        <taxon>Pezizomycotina</taxon>
        <taxon>Eurotiomycetes</taxon>
        <taxon>Eurotiomycetidae</taxon>
        <taxon>Eurotiales</taxon>
        <taxon>Aspergillaceae</taxon>
        <taxon>Aspergillus</taxon>
        <taxon>Aspergillus subgen. Circumdati</taxon>
    </lineage>
</organism>
<accession>B8NKS1</accession>
<protein>
    <recommendedName>
        <fullName>MYND-type zinc finger protein samB</fullName>
    </recommendedName>
    <alternativeName>
        <fullName>Suppressor of anucleate metulae protein B</fullName>
    </alternativeName>
</protein>
<name>MUB1_ASPFN</name>
<reference key="1">
    <citation type="journal article" date="2015" name="Genome Announc.">
        <title>Genome sequence of Aspergillus flavus NRRL 3357, a strain that causes aflatoxin contamination of food and feed.</title>
        <authorList>
            <person name="Nierman W.C."/>
            <person name="Yu J."/>
            <person name="Fedorova-Abrams N.D."/>
            <person name="Losada L."/>
            <person name="Cleveland T.E."/>
            <person name="Bhatnagar D."/>
            <person name="Bennett J.W."/>
            <person name="Dean R."/>
            <person name="Payne G.A."/>
        </authorList>
    </citation>
    <scope>NUCLEOTIDE SEQUENCE [LARGE SCALE GENOMIC DNA]</scope>
    <source>
        <strain>ATCC 200026 / FGSC A1120 / IAM 13836 / NRRL 3357 / JCM 12722 / SRRC 167</strain>
    </source>
</reference>
<comment type="function">
    <text evidence="1">Involved in determination of the onset of polarized growth and morphogenesis. Plays a role in the regulation of branching in hyphae and spore formation (By similarity).</text>
</comment>
<comment type="subcellular location">
    <subcellularLocation>
        <location evidence="1">Cytoplasm</location>
    </subcellularLocation>
</comment>
<comment type="similarity">
    <text evidence="4">Belongs to the MUB1/samB family.</text>
</comment>
<feature type="chain" id="PRO_0000393323" description="MYND-type zinc finger protein samB">
    <location>
        <begin position="1"/>
        <end position="605"/>
    </location>
</feature>
<feature type="zinc finger region" description="MYND-type; degenerate" evidence="2">
    <location>
        <begin position="560"/>
        <end position="601"/>
    </location>
</feature>
<feature type="region of interest" description="Disordered" evidence="3">
    <location>
        <begin position="133"/>
        <end position="241"/>
    </location>
</feature>
<feature type="region of interest" description="Disordered" evidence="3">
    <location>
        <begin position="274"/>
        <end position="349"/>
    </location>
</feature>
<feature type="compositionally biased region" description="Polar residues" evidence="3">
    <location>
        <begin position="189"/>
        <end position="206"/>
    </location>
</feature>
<feature type="compositionally biased region" description="Basic residues" evidence="3">
    <location>
        <begin position="226"/>
        <end position="241"/>
    </location>
</feature>
<feature type="compositionally biased region" description="Polar residues" evidence="3">
    <location>
        <begin position="279"/>
        <end position="306"/>
    </location>
</feature>
<feature type="binding site" evidence="2">
    <location>
        <position position="576"/>
    </location>
    <ligand>
        <name>Zn(2+)</name>
        <dbReference type="ChEBI" id="CHEBI:29105"/>
    </ligand>
</feature>
<feature type="binding site" evidence="2">
    <location>
        <position position="579"/>
    </location>
    <ligand>
        <name>Zn(2+)</name>
        <dbReference type="ChEBI" id="CHEBI:29105"/>
    </ligand>
</feature>
<feature type="binding site" evidence="2">
    <location>
        <position position="597"/>
    </location>
    <ligand>
        <name>Zn(2+)</name>
        <dbReference type="ChEBI" id="CHEBI:29105"/>
    </ligand>
</feature>
<feature type="binding site" evidence="2">
    <location>
        <position position="601"/>
    </location>
    <ligand>
        <name>Zn(2+)</name>
        <dbReference type="ChEBI" id="CHEBI:29105"/>
    </ligand>
</feature>
<keyword id="KW-0963">Cytoplasm</keyword>
<keyword id="KW-0479">Metal-binding</keyword>
<keyword id="KW-0749">Sporulation</keyword>
<keyword id="KW-0862">Zinc</keyword>
<keyword id="KW-0863">Zinc-finger</keyword>
<sequence length="605" mass="67684">MREVNFSIPNVNKASVNITTTLYDRRALDCTSTLPLINSLNHLAYLTTSSARIRDILTVDGGIERLVCILKEGRSRDLMEMWKWSLAFQCVVNIGVRGSESVRTRVVEADMVPVIATILDNYIKVVDKARARADSENQRHSSRHHPKAAPAAGDVTGRPSFPDQSSNSEQRTSRRQAPPPSIEIPAFLHQNTNAPDTNAMDVTSSPRAPMTSPPERSTFGQEAHIHRSHDGRHLHTGHRHRAMQPLATALPPMDTADGFGLRPVRDTERLPSMLPTLHNGITSQPDSPTTPNGPVQPRSHAQTSAARQRPTLRQQQSASGDSDDGNGEGSTLGDNAGSAETSEPIVGLQNEMEIDEVSDRQTMIDGVSNSHDLTVTDPSESQEAETFNISHRSTVDGSIINNDTTQTNTALGLSPTQAANNANSPALVPSPYTLYFRDRSAVPQNVLTTMPRDEDVLMSLQLLAYVSKYCNLRSYFQHSHLVPKLKVDRELQMLEEGASPIEPPEEEEEYMLPDDVNIFPLVEKFTVRHHSKDMQYWACVVMRNLCRKDESRGGIRQCAYYKCGKWEEFQRQFAKCRRCRRTKYCSKDCQKAAWVYHRHWCHTTP</sequence>
<gene>
    <name type="primary">samB</name>
    <name type="ORF">AFLA_093250</name>
</gene>
<evidence type="ECO:0000250" key="1"/>
<evidence type="ECO:0000255" key="2">
    <source>
        <dbReference type="PROSITE-ProRule" id="PRU00134"/>
    </source>
</evidence>
<evidence type="ECO:0000256" key="3">
    <source>
        <dbReference type="SAM" id="MobiDB-lite"/>
    </source>
</evidence>
<evidence type="ECO:0000305" key="4"/>
<dbReference type="EMBL" id="EQ963480">
    <property type="protein sequence ID" value="EED49244.1"/>
    <property type="molecule type" value="Genomic_DNA"/>
</dbReference>
<dbReference type="RefSeq" id="XP_002381145.1">
    <property type="nucleotide sequence ID" value="XM_002381104.1"/>
</dbReference>
<dbReference type="SMR" id="B8NKS1"/>
<dbReference type="EnsemblFungi" id="EED49244">
    <property type="protein sequence ID" value="EED49244"/>
    <property type="gene ID" value="AFLA_093250"/>
</dbReference>
<dbReference type="VEuPathDB" id="FungiDB:AFLA_009560"/>
<dbReference type="eggNOG" id="ENOG502QTM3">
    <property type="taxonomic scope" value="Eukaryota"/>
</dbReference>
<dbReference type="HOGENOM" id="CLU_014851_0_0_1"/>
<dbReference type="OMA" id="QDMQYWA"/>
<dbReference type="GO" id="GO:0005737">
    <property type="term" value="C:cytoplasm"/>
    <property type="evidence" value="ECO:0007669"/>
    <property type="project" value="UniProtKB-SubCell"/>
</dbReference>
<dbReference type="GO" id="GO:1990304">
    <property type="term" value="C:MUB1-RAD6-UBR2 ubiquitin ligase complex"/>
    <property type="evidence" value="ECO:0007669"/>
    <property type="project" value="TreeGrafter"/>
</dbReference>
<dbReference type="GO" id="GO:0008270">
    <property type="term" value="F:zinc ion binding"/>
    <property type="evidence" value="ECO:0007669"/>
    <property type="project" value="UniProtKB-KW"/>
</dbReference>
<dbReference type="GO" id="GO:0007163">
    <property type="term" value="P:establishment or maintenance of cell polarity"/>
    <property type="evidence" value="ECO:0007669"/>
    <property type="project" value="TreeGrafter"/>
</dbReference>
<dbReference type="GO" id="GO:1900735">
    <property type="term" value="P:positive regulation of flocculation"/>
    <property type="evidence" value="ECO:0007669"/>
    <property type="project" value="EnsemblFungi"/>
</dbReference>
<dbReference type="GO" id="GO:0030435">
    <property type="term" value="P:sporulation resulting in formation of a cellular spore"/>
    <property type="evidence" value="ECO:0007669"/>
    <property type="project" value="UniProtKB-KW"/>
</dbReference>
<dbReference type="GO" id="GO:0006511">
    <property type="term" value="P:ubiquitin-dependent protein catabolic process"/>
    <property type="evidence" value="ECO:0007669"/>
    <property type="project" value="TreeGrafter"/>
</dbReference>
<dbReference type="FunFam" id="6.10.140.2220:FF:000003">
    <property type="entry name" value="MYND-type zinc finger protein"/>
    <property type="match status" value="1"/>
</dbReference>
<dbReference type="Gene3D" id="6.10.140.2220">
    <property type="match status" value="1"/>
</dbReference>
<dbReference type="InterPro" id="IPR016024">
    <property type="entry name" value="ARM-type_fold"/>
</dbReference>
<dbReference type="InterPro" id="IPR051664">
    <property type="entry name" value="MYND-type_zinc_finger"/>
</dbReference>
<dbReference type="InterPro" id="IPR002893">
    <property type="entry name" value="Znf_MYND"/>
</dbReference>
<dbReference type="PANTHER" id="PTHR47442">
    <property type="entry name" value="MYND-TYPE ZINC FINGER PROTEIN MUB1"/>
    <property type="match status" value="1"/>
</dbReference>
<dbReference type="PANTHER" id="PTHR47442:SF1">
    <property type="entry name" value="MYND-TYPE ZINC FINGER PROTEIN MUB1"/>
    <property type="match status" value="1"/>
</dbReference>
<dbReference type="Pfam" id="PF01753">
    <property type="entry name" value="zf-MYND"/>
    <property type="match status" value="1"/>
</dbReference>
<dbReference type="SUPFAM" id="SSF48371">
    <property type="entry name" value="ARM repeat"/>
    <property type="match status" value="1"/>
</dbReference>
<dbReference type="SUPFAM" id="SSF144232">
    <property type="entry name" value="HIT/MYND zinc finger-like"/>
    <property type="match status" value="1"/>
</dbReference>
<dbReference type="PROSITE" id="PS01360">
    <property type="entry name" value="ZF_MYND_1"/>
    <property type="match status" value="1"/>
</dbReference>
<dbReference type="PROSITE" id="PS50865">
    <property type="entry name" value="ZF_MYND_2"/>
    <property type="match status" value="1"/>
</dbReference>